<comment type="function">
    <text evidence="1">Located at the top of the head of the 30S subunit, it contacts several helices of the 16S rRNA. In the 70S ribosome it contacts the 23S rRNA (bridge B1a) and protein L5 of the 50S subunit (bridge B1b), connecting the 2 subunits; these bridges are implicated in subunit movement. Contacts the tRNAs in the A and P-sites.</text>
</comment>
<comment type="subunit">
    <text evidence="1">Part of the 30S ribosomal subunit. Forms a loose heterodimer with protein S19. Forms two bridges to the 50S subunit in the 70S ribosome.</text>
</comment>
<comment type="similarity">
    <text evidence="1">Belongs to the universal ribosomal protein uS13 family.</text>
</comment>
<sequence length="126" mass="14106">MAIRIVGVDLPQNKRGEIALTYVYGIGRSSSAKILDKAGVDKDLKVKDWTDDQAAKIREIIGAEYKVEGDLRSEVQLNIKRLMDIGCYRGVRHRIGLPVRGQSTKNNARTRKGRKKTVANKKKATK</sequence>
<dbReference type="EMBL" id="CR626927">
    <property type="protein sequence ID" value="CAH09655.1"/>
    <property type="molecule type" value="Genomic_DNA"/>
</dbReference>
<dbReference type="RefSeq" id="WP_002558050.1">
    <property type="nucleotide sequence ID" value="NZ_UFTH01000001.1"/>
</dbReference>
<dbReference type="SMR" id="Q5L8D3"/>
<dbReference type="PaxDb" id="272559-BF9343_3874"/>
<dbReference type="GeneID" id="93105300"/>
<dbReference type="KEGG" id="bfs:BF9343_3874"/>
<dbReference type="eggNOG" id="COG0099">
    <property type="taxonomic scope" value="Bacteria"/>
</dbReference>
<dbReference type="HOGENOM" id="CLU_103849_1_2_10"/>
<dbReference type="Proteomes" id="UP000006731">
    <property type="component" value="Chromosome"/>
</dbReference>
<dbReference type="GO" id="GO:0005829">
    <property type="term" value="C:cytosol"/>
    <property type="evidence" value="ECO:0007669"/>
    <property type="project" value="TreeGrafter"/>
</dbReference>
<dbReference type="GO" id="GO:0015935">
    <property type="term" value="C:small ribosomal subunit"/>
    <property type="evidence" value="ECO:0007669"/>
    <property type="project" value="TreeGrafter"/>
</dbReference>
<dbReference type="GO" id="GO:0019843">
    <property type="term" value="F:rRNA binding"/>
    <property type="evidence" value="ECO:0007669"/>
    <property type="project" value="UniProtKB-UniRule"/>
</dbReference>
<dbReference type="GO" id="GO:0003735">
    <property type="term" value="F:structural constituent of ribosome"/>
    <property type="evidence" value="ECO:0007669"/>
    <property type="project" value="InterPro"/>
</dbReference>
<dbReference type="GO" id="GO:0000049">
    <property type="term" value="F:tRNA binding"/>
    <property type="evidence" value="ECO:0007669"/>
    <property type="project" value="UniProtKB-UniRule"/>
</dbReference>
<dbReference type="GO" id="GO:0006412">
    <property type="term" value="P:translation"/>
    <property type="evidence" value="ECO:0007669"/>
    <property type="project" value="UniProtKB-UniRule"/>
</dbReference>
<dbReference type="FunFam" id="1.10.8.50:FF:000001">
    <property type="entry name" value="30S ribosomal protein S13"/>
    <property type="match status" value="1"/>
</dbReference>
<dbReference type="FunFam" id="4.10.910.10:FF:000001">
    <property type="entry name" value="30S ribosomal protein S13"/>
    <property type="match status" value="1"/>
</dbReference>
<dbReference type="Gene3D" id="1.10.8.50">
    <property type="match status" value="1"/>
</dbReference>
<dbReference type="Gene3D" id="4.10.910.10">
    <property type="entry name" value="30s ribosomal protein s13, domain 2"/>
    <property type="match status" value="1"/>
</dbReference>
<dbReference type="HAMAP" id="MF_01315">
    <property type="entry name" value="Ribosomal_uS13"/>
    <property type="match status" value="1"/>
</dbReference>
<dbReference type="InterPro" id="IPR027437">
    <property type="entry name" value="Rbsml_uS13_C"/>
</dbReference>
<dbReference type="InterPro" id="IPR001892">
    <property type="entry name" value="Ribosomal_uS13"/>
</dbReference>
<dbReference type="InterPro" id="IPR010979">
    <property type="entry name" value="Ribosomal_uS13-like_H2TH"/>
</dbReference>
<dbReference type="InterPro" id="IPR019980">
    <property type="entry name" value="Ribosomal_uS13_bac-type"/>
</dbReference>
<dbReference type="InterPro" id="IPR018269">
    <property type="entry name" value="Ribosomal_uS13_CS"/>
</dbReference>
<dbReference type="NCBIfam" id="TIGR03631">
    <property type="entry name" value="uS13_bact"/>
    <property type="match status" value="1"/>
</dbReference>
<dbReference type="PANTHER" id="PTHR10871">
    <property type="entry name" value="30S RIBOSOMAL PROTEIN S13/40S RIBOSOMAL PROTEIN S18"/>
    <property type="match status" value="1"/>
</dbReference>
<dbReference type="PANTHER" id="PTHR10871:SF1">
    <property type="entry name" value="SMALL RIBOSOMAL SUBUNIT PROTEIN US13M"/>
    <property type="match status" value="1"/>
</dbReference>
<dbReference type="Pfam" id="PF00416">
    <property type="entry name" value="Ribosomal_S13"/>
    <property type="match status" value="1"/>
</dbReference>
<dbReference type="PIRSF" id="PIRSF002134">
    <property type="entry name" value="Ribosomal_S13"/>
    <property type="match status" value="1"/>
</dbReference>
<dbReference type="SUPFAM" id="SSF46946">
    <property type="entry name" value="S13-like H2TH domain"/>
    <property type="match status" value="1"/>
</dbReference>
<dbReference type="PROSITE" id="PS00646">
    <property type="entry name" value="RIBOSOMAL_S13_1"/>
    <property type="match status" value="1"/>
</dbReference>
<dbReference type="PROSITE" id="PS50159">
    <property type="entry name" value="RIBOSOMAL_S13_2"/>
    <property type="match status" value="1"/>
</dbReference>
<feature type="chain" id="PRO_0000230472" description="Small ribosomal subunit protein uS13">
    <location>
        <begin position="1"/>
        <end position="126"/>
    </location>
</feature>
<feature type="region of interest" description="Disordered" evidence="2">
    <location>
        <begin position="98"/>
        <end position="126"/>
    </location>
</feature>
<feature type="compositionally biased region" description="Basic residues" evidence="2">
    <location>
        <begin position="108"/>
        <end position="126"/>
    </location>
</feature>
<gene>
    <name evidence="1" type="primary">rpsM</name>
    <name type="ordered locus">BF3979</name>
</gene>
<keyword id="KW-0687">Ribonucleoprotein</keyword>
<keyword id="KW-0689">Ribosomal protein</keyword>
<keyword id="KW-0694">RNA-binding</keyword>
<keyword id="KW-0699">rRNA-binding</keyword>
<keyword id="KW-0820">tRNA-binding</keyword>
<protein>
    <recommendedName>
        <fullName evidence="1">Small ribosomal subunit protein uS13</fullName>
    </recommendedName>
    <alternativeName>
        <fullName evidence="3">30S ribosomal protein S13</fullName>
    </alternativeName>
</protein>
<accession>Q5L8D3</accession>
<organism>
    <name type="scientific">Bacteroides fragilis (strain ATCC 25285 / DSM 2151 / CCUG 4856 / JCM 11019 / LMG 10263 / NCTC 9343 / Onslow / VPI 2553 / EN-2)</name>
    <dbReference type="NCBI Taxonomy" id="272559"/>
    <lineage>
        <taxon>Bacteria</taxon>
        <taxon>Pseudomonadati</taxon>
        <taxon>Bacteroidota</taxon>
        <taxon>Bacteroidia</taxon>
        <taxon>Bacteroidales</taxon>
        <taxon>Bacteroidaceae</taxon>
        <taxon>Bacteroides</taxon>
    </lineage>
</organism>
<reference key="1">
    <citation type="journal article" date="2005" name="Science">
        <title>Extensive DNA inversions in the B. fragilis genome control variable gene expression.</title>
        <authorList>
            <person name="Cerdeno-Tarraga A.-M."/>
            <person name="Patrick S."/>
            <person name="Crossman L.C."/>
            <person name="Blakely G."/>
            <person name="Abratt V."/>
            <person name="Lennard N."/>
            <person name="Poxton I."/>
            <person name="Duerden B."/>
            <person name="Harris B."/>
            <person name="Quail M.A."/>
            <person name="Barron A."/>
            <person name="Clark L."/>
            <person name="Corton C."/>
            <person name="Doggett J."/>
            <person name="Holden M.T.G."/>
            <person name="Larke N."/>
            <person name="Line A."/>
            <person name="Lord A."/>
            <person name="Norbertczak H."/>
            <person name="Ormond D."/>
            <person name="Price C."/>
            <person name="Rabbinowitsch E."/>
            <person name="Woodward J."/>
            <person name="Barrell B.G."/>
            <person name="Parkhill J."/>
        </authorList>
    </citation>
    <scope>NUCLEOTIDE SEQUENCE [LARGE SCALE GENOMIC DNA]</scope>
    <source>
        <strain>ATCC 25285 / DSM 2151 / CCUG 4856 / JCM 11019 / LMG 10263 / NCTC 9343 / Onslow / VPI 2553 / EN-2</strain>
    </source>
</reference>
<evidence type="ECO:0000255" key="1">
    <source>
        <dbReference type="HAMAP-Rule" id="MF_01315"/>
    </source>
</evidence>
<evidence type="ECO:0000256" key="2">
    <source>
        <dbReference type="SAM" id="MobiDB-lite"/>
    </source>
</evidence>
<evidence type="ECO:0000305" key="3"/>
<proteinExistence type="inferred from homology"/>
<name>RS13_BACFN</name>